<keyword id="KW-0749">Sporulation</keyword>
<reference key="1">
    <citation type="submission" date="2008-10" db="EMBL/GenBank/DDBJ databases">
        <title>Genome sequence of Bacillus cereus B4264.</title>
        <authorList>
            <person name="Dodson R.J."/>
            <person name="Durkin A.S."/>
            <person name="Rosovitz M.J."/>
            <person name="Rasko D.A."/>
            <person name="Hoffmaster A."/>
            <person name="Ravel J."/>
            <person name="Sutton G."/>
        </authorList>
    </citation>
    <scope>NUCLEOTIDE SEQUENCE [LARGE SCALE GENOMIC DNA]</scope>
    <source>
        <strain>B4264</strain>
    </source>
</reference>
<name>SSPK_BACC4</name>
<feature type="chain" id="PRO_1000196546" description="Small, acid-soluble spore protein K">
    <location>
        <begin position="1"/>
        <end position="52"/>
    </location>
</feature>
<feature type="region of interest" description="Disordered" evidence="2">
    <location>
        <begin position="1"/>
        <end position="52"/>
    </location>
</feature>
<protein>
    <recommendedName>
        <fullName evidence="1">Small, acid-soluble spore protein K</fullName>
        <shortName evidence="1">SASP K</shortName>
    </recommendedName>
</protein>
<accession>B7H9R2</accession>
<gene>
    <name evidence="1" type="primary">sspK</name>
    <name type="ordered locus">BCB4264_A0522</name>
</gene>
<dbReference type="EMBL" id="CP001176">
    <property type="protein sequence ID" value="ACK61749.1"/>
    <property type="molecule type" value="Genomic_DNA"/>
</dbReference>
<dbReference type="RefSeq" id="WP_000517891.1">
    <property type="nucleotide sequence ID" value="NZ_VEHB01000009.1"/>
</dbReference>
<dbReference type="KEGG" id="bcb:BCB4264_A0522"/>
<dbReference type="HOGENOM" id="CLU_3076423_0_0_9"/>
<dbReference type="Proteomes" id="UP000007096">
    <property type="component" value="Chromosome"/>
</dbReference>
<dbReference type="GO" id="GO:0042601">
    <property type="term" value="C:endospore-forming forespore"/>
    <property type="evidence" value="ECO:0007669"/>
    <property type="project" value="InterPro"/>
</dbReference>
<dbReference type="GO" id="GO:0030436">
    <property type="term" value="P:asexual sporulation"/>
    <property type="evidence" value="ECO:0007669"/>
    <property type="project" value="UniProtKB-UniRule"/>
</dbReference>
<dbReference type="GO" id="GO:0030435">
    <property type="term" value="P:sporulation resulting in formation of a cellular spore"/>
    <property type="evidence" value="ECO:0007669"/>
    <property type="project" value="UniProtKB-KW"/>
</dbReference>
<dbReference type="HAMAP" id="MF_01504">
    <property type="entry name" value="SspK"/>
    <property type="match status" value="1"/>
</dbReference>
<dbReference type="InterPro" id="IPR012611">
    <property type="entry name" value="SASP_SspK"/>
</dbReference>
<dbReference type="NCBIfam" id="NF002843">
    <property type="entry name" value="PRK03081.1"/>
    <property type="match status" value="1"/>
</dbReference>
<dbReference type="NCBIfam" id="TIGR03091">
    <property type="entry name" value="SASP_sspK"/>
    <property type="match status" value="1"/>
</dbReference>
<dbReference type="Pfam" id="PF08176">
    <property type="entry name" value="SspK"/>
    <property type="match status" value="1"/>
</dbReference>
<organism>
    <name type="scientific">Bacillus cereus (strain B4264)</name>
    <dbReference type="NCBI Taxonomy" id="405532"/>
    <lineage>
        <taxon>Bacteria</taxon>
        <taxon>Bacillati</taxon>
        <taxon>Bacillota</taxon>
        <taxon>Bacilli</taxon>
        <taxon>Bacillales</taxon>
        <taxon>Bacillaceae</taxon>
        <taxon>Bacillus</taxon>
        <taxon>Bacillus cereus group</taxon>
    </lineage>
</organism>
<evidence type="ECO:0000255" key="1">
    <source>
        <dbReference type="HAMAP-Rule" id="MF_01504"/>
    </source>
</evidence>
<evidence type="ECO:0000256" key="2">
    <source>
        <dbReference type="SAM" id="MobiDB-lite"/>
    </source>
</evidence>
<proteinExistence type="inferred from homology"/>
<sequence>MGKQAEFWSESKNNSKIDGQPKAKSRFASKRPNGTINTHPQERMRAANQQEE</sequence>
<comment type="subcellular location">
    <subcellularLocation>
        <location evidence="1">Spore core</location>
    </subcellularLocation>
</comment>
<comment type="induction">
    <text evidence="1">Expressed only in the forespore compartment of sporulating cells.</text>
</comment>
<comment type="similarity">
    <text evidence="1">Belongs to the SspK family.</text>
</comment>